<feature type="chain" id="PRO_1000188154" description="Small ribosomal subunit biogenesis GTPase RsgA">
    <location>
        <begin position="1"/>
        <end position="363"/>
    </location>
</feature>
<feature type="domain" description="CP-type G" evidence="2">
    <location>
        <begin position="112"/>
        <end position="268"/>
    </location>
</feature>
<feature type="region of interest" description="Disordered" evidence="3">
    <location>
        <begin position="340"/>
        <end position="363"/>
    </location>
</feature>
<feature type="binding site" evidence="1">
    <location>
        <begin position="157"/>
        <end position="160"/>
    </location>
    <ligand>
        <name>GTP</name>
        <dbReference type="ChEBI" id="CHEBI:37565"/>
    </ligand>
</feature>
<feature type="binding site" evidence="1">
    <location>
        <begin position="210"/>
        <end position="218"/>
    </location>
    <ligand>
        <name>GTP</name>
        <dbReference type="ChEBI" id="CHEBI:37565"/>
    </ligand>
</feature>
<feature type="binding site" evidence="1">
    <location>
        <position position="291"/>
    </location>
    <ligand>
        <name>Zn(2+)</name>
        <dbReference type="ChEBI" id="CHEBI:29105"/>
    </ligand>
</feature>
<feature type="binding site" evidence="1">
    <location>
        <position position="296"/>
    </location>
    <ligand>
        <name>Zn(2+)</name>
        <dbReference type="ChEBI" id="CHEBI:29105"/>
    </ligand>
</feature>
<feature type="binding site" evidence="1">
    <location>
        <position position="298"/>
    </location>
    <ligand>
        <name>Zn(2+)</name>
        <dbReference type="ChEBI" id="CHEBI:29105"/>
    </ligand>
</feature>
<feature type="binding site" evidence="1">
    <location>
        <position position="304"/>
    </location>
    <ligand>
        <name>Zn(2+)</name>
        <dbReference type="ChEBI" id="CHEBI:29105"/>
    </ligand>
</feature>
<dbReference type="EC" id="3.6.1.-" evidence="1"/>
<dbReference type="EMBL" id="CP000967">
    <property type="protein sequence ID" value="ACD60707.1"/>
    <property type="molecule type" value="Genomic_DNA"/>
</dbReference>
<dbReference type="RefSeq" id="WP_012445896.1">
    <property type="nucleotide sequence ID" value="NC_010717.2"/>
</dbReference>
<dbReference type="SMR" id="B2SLQ8"/>
<dbReference type="KEGG" id="xop:PXO_02419"/>
<dbReference type="eggNOG" id="COG1162">
    <property type="taxonomic scope" value="Bacteria"/>
</dbReference>
<dbReference type="HOGENOM" id="CLU_033617_0_1_6"/>
<dbReference type="Proteomes" id="UP000001740">
    <property type="component" value="Chromosome"/>
</dbReference>
<dbReference type="GO" id="GO:0005737">
    <property type="term" value="C:cytoplasm"/>
    <property type="evidence" value="ECO:0007669"/>
    <property type="project" value="UniProtKB-SubCell"/>
</dbReference>
<dbReference type="GO" id="GO:0005525">
    <property type="term" value="F:GTP binding"/>
    <property type="evidence" value="ECO:0007669"/>
    <property type="project" value="UniProtKB-UniRule"/>
</dbReference>
<dbReference type="GO" id="GO:0003924">
    <property type="term" value="F:GTPase activity"/>
    <property type="evidence" value="ECO:0007669"/>
    <property type="project" value="UniProtKB-UniRule"/>
</dbReference>
<dbReference type="GO" id="GO:0046872">
    <property type="term" value="F:metal ion binding"/>
    <property type="evidence" value="ECO:0007669"/>
    <property type="project" value="UniProtKB-KW"/>
</dbReference>
<dbReference type="GO" id="GO:0019843">
    <property type="term" value="F:rRNA binding"/>
    <property type="evidence" value="ECO:0007669"/>
    <property type="project" value="UniProtKB-KW"/>
</dbReference>
<dbReference type="GO" id="GO:0042274">
    <property type="term" value="P:ribosomal small subunit biogenesis"/>
    <property type="evidence" value="ECO:0007669"/>
    <property type="project" value="UniProtKB-UniRule"/>
</dbReference>
<dbReference type="CDD" id="cd01854">
    <property type="entry name" value="YjeQ_EngC"/>
    <property type="match status" value="1"/>
</dbReference>
<dbReference type="Gene3D" id="3.40.50.300">
    <property type="entry name" value="P-loop containing nucleotide triphosphate hydrolases"/>
    <property type="match status" value="1"/>
</dbReference>
<dbReference type="Gene3D" id="1.10.40.50">
    <property type="entry name" value="Probable gtpase engc, domain 3"/>
    <property type="match status" value="1"/>
</dbReference>
<dbReference type="HAMAP" id="MF_01820">
    <property type="entry name" value="GTPase_RsgA"/>
    <property type="match status" value="1"/>
</dbReference>
<dbReference type="InterPro" id="IPR030378">
    <property type="entry name" value="G_CP_dom"/>
</dbReference>
<dbReference type="InterPro" id="IPR027417">
    <property type="entry name" value="P-loop_NTPase"/>
</dbReference>
<dbReference type="InterPro" id="IPR004881">
    <property type="entry name" value="Ribosome_biogen_GTPase_RsgA"/>
</dbReference>
<dbReference type="InterPro" id="IPR010914">
    <property type="entry name" value="RsgA_GTPase_dom"/>
</dbReference>
<dbReference type="NCBIfam" id="TIGR00157">
    <property type="entry name" value="ribosome small subunit-dependent GTPase A"/>
    <property type="match status" value="1"/>
</dbReference>
<dbReference type="PANTHER" id="PTHR32120">
    <property type="entry name" value="SMALL RIBOSOMAL SUBUNIT BIOGENESIS GTPASE RSGA"/>
    <property type="match status" value="1"/>
</dbReference>
<dbReference type="PANTHER" id="PTHR32120:SF10">
    <property type="entry name" value="SMALL RIBOSOMAL SUBUNIT BIOGENESIS GTPASE RSGA"/>
    <property type="match status" value="1"/>
</dbReference>
<dbReference type="Pfam" id="PF03193">
    <property type="entry name" value="RsgA_GTPase"/>
    <property type="match status" value="1"/>
</dbReference>
<dbReference type="SUPFAM" id="SSF52540">
    <property type="entry name" value="P-loop containing nucleoside triphosphate hydrolases"/>
    <property type="match status" value="1"/>
</dbReference>
<dbReference type="PROSITE" id="PS50936">
    <property type="entry name" value="ENGC_GTPASE"/>
    <property type="match status" value="1"/>
</dbReference>
<dbReference type="PROSITE" id="PS51721">
    <property type="entry name" value="G_CP"/>
    <property type="match status" value="1"/>
</dbReference>
<accession>B2SLQ8</accession>
<organism>
    <name type="scientific">Xanthomonas oryzae pv. oryzae (strain PXO99A)</name>
    <dbReference type="NCBI Taxonomy" id="360094"/>
    <lineage>
        <taxon>Bacteria</taxon>
        <taxon>Pseudomonadati</taxon>
        <taxon>Pseudomonadota</taxon>
        <taxon>Gammaproteobacteria</taxon>
        <taxon>Lysobacterales</taxon>
        <taxon>Lysobacteraceae</taxon>
        <taxon>Xanthomonas</taxon>
    </lineage>
</organism>
<gene>
    <name evidence="1" type="primary">rsgA</name>
    <name type="ordered locus">PXO_02419</name>
</gene>
<proteinExistence type="inferred from homology"/>
<comment type="function">
    <text evidence="1">One of several proteins that assist in the late maturation steps of the functional core of the 30S ribosomal subunit. Helps release RbfA from mature subunits. May play a role in the assembly of ribosomal proteins into the subunit. Circularly permuted GTPase that catalyzes slow GTP hydrolysis, GTPase activity is stimulated by the 30S ribosomal subunit.</text>
</comment>
<comment type="cofactor">
    <cofactor evidence="1">
        <name>Zn(2+)</name>
        <dbReference type="ChEBI" id="CHEBI:29105"/>
    </cofactor>
    <text evidence="1">Binds 1 zinc ion per subunit.</text>
</comment>
<comment type="subunit">
    <text evidence="1">Monomer. Associates with 30S ribosomal subunit, binds 16S rRNA.</text>
</comment>
<comment type="subcellular location">
    <subcellularLocation>
        <location evidence="1">Cytoplasm</location>
    </subcellularLocation>
</comment>
<comment type="similarity">
    <text evidence="1">Belongs to the TRAFAC class YlqF/YawG GTPase family. RsgA subfamily.</text>
</comment>
<evidence type="ECO:0000255" key="1">
    <source>
        <dbReference type="HAMAP-Rule" id="MF_01820"/>
    </source>
</evidence>
<evidence type="ECO:0000255" key="2">
    <source>
        <dbReference type="PROSITE-ProRule" id="PRU01058"/>
    </source>
</evidence>
<evidence type="ECO:0000256" key="3">
    <source>
        <dbReference type="SAM" id="MobiDB-lite"/>
    </source>
</evidence>
<reference key="1">
    <citation type="journal article" date="2008" name="BMC Genomics">
        <title>Genome sequence and rapid evolution of the rice pathogen Xanthomonas oryzae pv. oryzae PXO99A.</title>
        <authorList>
            <person name="Salzberg S.L."/>
            <person name="Sommer D.D."/>
            <person name="Schatz M.C."/>
            <person name="Phillippy A.M."/>
            <person name="Rabinowicz P.D."/>
            <person name="Tsuge S."/>
            <person name="Furutani A."/>
            <person name="Ochiai H."/>
            <person name="Delcher A.L."/>
            <person name="Kelley D."/>
            <person name="Madupu R."/>
            <person name="Puiu D."/>
            <person name="Radune D."/>
            <person name="Shumway M."/>
            <person name="Trapnell C."/>
            <person name="Aparna G."/>
            <person name="Jha G."/>
            <person name="Pandey A."/>
            <person name="Patil P.B."/>
            <person name="Ishihara H."/>
            <person name="Meyer D.F."/>
            <person name="Szurek B."/>
            <person name="Verdier V."/>
            <person name="Koebnik R."/>
            <person name="Dow J.M."/>
            <person name="Ryan R.P."/>
            <person name="Hirata H."/>
            <person name="Tsuyumu S."/>
            <person name="Won Lee S."/>
            <person name="Seo Y.-S."/>
            <person name="Sriariyanum M."/>
            <person name="Ronald P.C."/>
            <person name="Sonti R.V."/>
            <person name="Van Sluys M.-A."/>
            <person name="Leach J.E."/>
            <person name="White F.F."/>
            <person name="Bogdanove A.J."/>
        </authorList>
    </citation>
    <scope>NUCLEOTIDE SEQUENCE [LARGE SCALE GENOMIC DNA]</scope>
    <source>
        <strain>PXO99A</strain>
    </source>
</reference>
<keyword id="KW-0963">Cytoplasm</keyword>
<keyword id="KW-0342">GTP-binding</keyword>
<keyword id="KW-0378">Hydrolase</keyword>
<keyword id="KW-0479">Metal-binding</keyword>
<keyword id="KW-0547">Nucleotide-binding</keyword>
<keyword id="KW-0690">Ribosome biogenesis</keyword>
<keyword id="KW-0694">RNA-binding</keyword>
<keyword id="KW-0699">rRNA-binding</keyword>
<keyword id="KW-0862">Zinc</keyword>
<sequence>MSDISPDYPTLQSIGWPWPGPPEEAAWKAVFAAHPQALPARVVEQHRTGYVVADTPEASLKAESLPEWQRPRFPSHERAAVGDWVLMEGKRIVALLPRRTSIKRGAAGAHYHQQVIAANIDTVFIVCGLDADFNPRRIERYLLLVGGGGAQPVVVLTKADQTEHAEDALAVLEELEAQNIPLRALNAKDPASVAALRPWLGDGRTAVLVGSSGAGKSTLTNTLLGTEKMKTNGVRENDSRGRHTTTHRALIPLPSGACLIDTPGMRELKPTGEEDLAEGGFSDVEALAAQCRFNDCAHIAEPGCAVRAAIEADLLDPERVANYMKLRVEVASAAEKLATRVAQNNRGKGSGKRPASIDRPGRR</sequence>
<name>RSGA_XANOP</name>
<protein>
    <recommendedName>
        <fullName evidence="1">Small ribosomal subunit biogenesis GTPase RsgA</fullName>
        <ecNumber evidence="1">3.6.1.-</ecNumber>
    </recommendedName>
</protein>